<proteinExistence type="evidence at protein level"/>
<feature type="chain" id="PRO_0000345163" description="Serine/threonine-protein kinase SRK2I">
    <location>
        <begin position="1"/>
        <end position="361"/>
    </location>
</feature>
<feature type="domain" description="Protein kinase" evidence="1">
    <location>
        <begin position="22"/>
        <end position="278"/>
    </location>
</feature>
<feature type="active site" description="Proton acceptor" evidence="1 2">
    <location>
        <position position="141"/>
    </location>
</feature>
<feature type="binding site" evidence="1">
    <location>
        <begin position="28"/>
        <end position="36"/>
    </location>
    <ligand>
        <name>ATP</name>
        <dbReference type="ChEBI" id="CHEBI:30616"/>
    </ligand>
</feature>
<feature type="binding site" evidence="1">
    <location>
        <position position="51"/>
    </location>
    <ligand>
        <name>ATP</name>
        <dbReference type="ChEBI" id="CHEBI:30616"/>
    </ligand>
</feature>
<feature type="sequence conflict" description="In Ref. 4; AAN72093/AAM13097." evidence="10" ref="4">
    <original>D</original>
    <variation>N</variation>
    <location>
        <position position="262"/>
    </location>
</feature>
<feature type="turn" evidence="11">
    <location>
        <begin position="19"/>
        <end position="21"/>
    </location>
</feature>
<feature type="strand" evidence="11">
    <location>
        <begin position="22"/>
        <end position="31"/>
    </location>
</feature>
<feature type="strand" evidence="11">
    <location>
        <begin position="34"/>
        <end position="41"/>
    </location>
</feature>
<feature type="turn" evidence="11">
    <location>
        <begin position="42"/>
        <end position="44"/>
    </location>
</feature>
<feature type="strand" evidence="11">
    <location>
        <begin position="47"/>
        <end position="56"/>
    </location>
</feature>
<feature type="helix" evidence="11">
    <location>
        <begin position="61"/>
        <end position="72"/>
    </location>
</feature>
<feature type="strand" evidence="11">
    <location>
        <begin position="81"/>
        <end position="86"/>
    </location>
</feature>
<feature type="strand" evidence="11">
    <location>
        <begin position="88"/>
        <end position="96"/>
    </location>
</feature>
<feature type="helix" evidence="11">
    <location>
        <begin position="103"/>
        <end position="110"/>
    </location>
</feature>
<feature type="helix" evidence="11">
    <location>
        <begin position="115"/>
        <end position="134"/>
    </location>
</feature>
<feature type="helix" evidence="11">
    <location>
        <begin position="144"/>
        <end position="146"/>
    </location>
</feature>
<feature type="strand" evidence="11">
    <location>
        <begin position="147"/>
        <end position="149"/>
    </location>
</feature>
<feature type="strand" evidence="11">
    <location>
        <begin position="151"/>
        <end position="154"/>
    </location>
</feature>
<feature type="strand" evidence="11">
    <location>
        <begin position="157"/>
        <end position="159"/>
    </location>
</feature>
<feature type="helix" evidence="11">
    <location>
        <begin position="186"/>
        <end position="190"/>
    </location>
</feature>
<feature type="helix" evidence="11">
    <location>
        <begin position="196"/>
        <end position="213"/>
    </location>
</feature>
<feature type="helix" evidence="11">
    <location>
        <begin position="227"/>
        <end position="235"/>
    </location>
</feature>
<feature type="helix" evidence="11">
    <location>
        <begin position="249"/>
        <end position="258"/>
    </location>
</feature>
<feature type="turn" evidence="11">
    <location>
        <begin position="263"/>
        <end position="265"/>
    </location>
</feature>
<feature type="helix" evidence="11">
    <location>
        <begin position="269"/>
        <end position="273"/>
    </location>
</feature>
<feature type="helix" evidence="11">
    <location>
        <begin position="276"/>
        <end position="279"/>
    </location>
</feature>
<feature type="helix" evidence="11">
    <location>
        <begin position="306"/>
        <end position="316"/>
    </location>
</feature>
<organism>
    <name type="scientific">Arabidopsis thaliana</name>
    <name type="common">Mouse-ear cress</name>
    <dbReference type="NCBI Taxonomy" id="3702"/>
    <lineage>
        <taxon>Eukaryota</taxon>
        <taxon>Viridiplantae</taxon>
        <taxon>Streptophyta</taxon>
        <taxon>Embryophyta</taxon>
        <taxon>Tracheophyta</taxon>
        <taxon>Spermatophyta</taxon>
        <taxon>Magnoliopsida</taxon>
        <taxon>eudicotyledons</taxon>
        <taxon>Gunneridae</taxon>
        <taxon>Pentapetalae</taxon>
        <taxon>rosids</taxon>
        <taxon>malvids</taxon>
        <taxon>Brassicales</taxon>
        <taxon>Brassicaceae</taxon>
        <taxon>Camelineae</taxon>
        <taxon>Arabidopsis</taxon>
    </lineage>
</organism>
<name>SRK2I_ARATH</name>
<comment type="function">
    <text evidence="5 9">Together with SRK2D, key component and activator of the abscisic acid (ABA) signaling pathway that regulates numerous ABA responses, such as seed germination, Pro accumulation, root growth inhibition, dormancy and seedling growth, and, to a lesser extent, stomatal closure (PubMed:17307925). In response to ABA, phosphorylates the ESCRT-I complex component FREE1, which is required for ABA-induced FREE1 nuclear import (PubMed:30962512).</text>
</comment>
<comment type="catalytic activity">
    <reaction>
        <text>L-seryl-[protein] + ATP = O-phospho-L-seryl-[protein] + ADP + H(+)</text>
        <dbReference type="Rhea" id="RHEA:17989"/>
        <dbReference type="Rhea" id="RHEA-COMP:9863"/>
        <dbReference type="Rhea" id="RHEA-COMP:11604"/>
        <dbReference type="ChEBI" id="CHEBI:15378"/>
        <dbReference type="ChEBI" id="CHEBI:29999"/>
        <dbReference type="ChEBI" id="CHEBI:30616"/>
        <dbReference type="ChEBI" id="CHEBI:83421"/>
        <dbReference type="ChEBI" id="CHEBI:456216"/>
        <dbReference type="EC" id="2.7.11.1"/>
    </reaction>
</comment>
<comment type="catalytic activity">
    <reaction>
        <text>L-threonyl-[protein] + ATP = O-phospho-L-threonyl-[protein] + ADP + H(+)</text>
        <dbReference type="Rhea" id="RHEA:46608"/>
        <dbReference type="Rhea" id="RHEA-COMP:11060"/>
        <dbReference type="Rhea" id="RHEA-COMP:11605"/>
        <dbReference type="ChEBI" id="CHEBI:15378"/>
        <dbReference type="ChEBI" id="CHEBI:30013"/>
        <dbReference type="ChEBI" id="CHEBI:30616"/>
        <dbReference type="ChEBI" id="CHEBI:61977"/>
        <dbReference type="ChEBI" id="CHEBI:456216"/>
        <dbReference type="EC" id="2.7.11.1"/>
    </reaction>
</comment>
<comment type="activity regulation">
    <text evidence="7">Activated by autophosphorylation of its activation loop.</text>
</comment>
<comment type="subunit">
    <text evidence="6 8 9">Interacts with ABI1 (PubMed:19874541). Interacts with I-2 and TOPP1 (PubMed:26943172). Interacts with FREE1 (via C-terminus) (PubMed:30962512).</text>
</comment>
<comment type="interaction">
    <interactant intactId="EBI-2620383">
        <id>Q39193</id>
    </interactant>
    <interactant intactId="EBI-782526">
        <id>P49597</id>
        <label>ABI1</label>
    </interactant>
    <organismsDiffer>false</organismsDiffer>
    <experiments>8</experiments>
</comment>
<comment type="interaction">
    <interactant intactId="EBI-2620383">
        <id>Q39193</id>
    </interactant>
    <interactant intactId="EBI-15803514">
        <id>O04719-1</id>
        <label>ABI2</label>
    </interactant>
    <organismsDiffer>false</organismsDiffer>
    <experiments>2</experiments>
</comment>
<comment type="interaction">
    <interactant intactId="EBI-2620383">
        <id>Q39193</id>
    </interactant>
    <interactant intactId="EBI-2363348">
        <id>Q9FLI3</id>
        <label>AHG1</label>
    </interactant>
    <organismsDiffer>false</organismsDiffer>
    <experiments>2</experiments>
</comment>
<comment type="interaction">
    <interactant intactId="EBI-2620383">
        <id>Q39193</id>
    </interactant>
    <interactant intactId="EBI-2309302">
        <id>Q9CAJ0</id>
        <label>HAB1</label>
    </interactant>
    <organismsDiffer>false</organismsDiffer>
    <experiments>2</experiments>
</comment>
<comment type="tissue specificity">
    <text evidence="3 5">Expressed at low levels in seeds, seedlings, roots (especially in tips), stems, leaves, shoots, flowers and siliques.</text>
</comment>
<comment type="induction">
    <text evidence="3 4">By abscisic acid (ABA), salt, and osmotic stress (at protein level).</text>
</comment>
<comment type="PTM">
    <text evidence="7">Autophosphorylated in vitro.</text>
</comment>
<comment type="similarity">
    <text evidence="1">Belongs to the protein kinase superfamily. Ser/Thr protein kinase family.</text>
</comment>
<comment type="sequence caution" evidence="10">
    <conflict type="erroneous initiation">
        <sequence resource="EMBL-CDS" id="AAM13097"/>
    </conflict>
    <text>Truncated N-terminus.</text>
</comment>
<sequence length="361" mass="41085">MDRAPVTTGPLDMPIMHDSDRYDFVKDIGSGNFGVARLMRDKLTKELVAVKYIERGDKIDENVQREIINHRSLRHPNIVRFKEVILTPTHLAIIMEYASGGELYERICNAGRFSEDEARFFFQQLLSGVSYCHSMQICHRDLKLENTLLDGSPAPRLKICDFGYSKSSVLHSQPKSTVGTPAYIAPEVLLRQEYDGKIADVWSCGVTLYVMLVGAYPFEDPEEPRDYRKTIQRILSVKYSIPDDIRISPECCHLISRIFVADPATRISIPEIKTHSWFLKNLPADLMNESNTGSQFQEPEQPMQSLDTIMQIISEATIPAVRNRCLDDFMTDNLDLDDDMDDFDSESEIDIDSSGEIVYAL</sequence>
<keyword id="KW-0002">3D-structure</keyword>
<keyword id="KW-0938">Abscisic acid signaling pathway</keyword>
<keyword id="KW-0067">ATP-binding</keyword>
<keyword id="KW-0418">Kinase</keyword>
<keyword id="KW-0547">Nucleotide-binding</keyword>
<keyword id="KW-1185">Reference proteome</keyword>
<keyword id="KW-0723">Serine/threonine-protein kinase</keyword>
<keyword id="KW-0808">Transferase</keyword>
<gene>
    <name type="primary">SRK2I</name>
    <name type="synonym">41K</name>
    <name type="synonym">OSKL2</name>
    <name type="synonym">SNRK2.3</name>
    <name type="ordered locus">At5g66880</name>
    <name type="ORF">MUD21.14</name>
</gene>
<dbReference type="EC" id="2.7.11.1"/>
<dbReference type="EMBL" id="L05562">
    <property type="protein sequence ID" value="AAA32846.1"/>
    <property type="molecule type" value="mRNA"/>
</dbReference>
<dbReference type="EMBL" id="AB010700">
    <property type="protein sequence ID" value="BAB08630.1"/>
    <property type="molecule type" value="Genomic_DNA"/>
</dbReference>
<dbReference type="EMBL" id="CP002688">
    <property type="protein sequence ID" value="AED98274.1"/>
    <property type="molecule type" value="Genomic_DNA"/>
</dbReference>
<dbReference type="EMBL" id="CP002688">
    <property type="protein sequence ID" value="ANM70143.1"/>
    <property type="molecule type" value="Genomic_DNA"/>
</dbReference>
<dbReference type="EMBL" id="AY093098">
    <property type="protein sequence ID" value="AAM13097.1"/>
    <property type="status" value="ALT_INIT"/>
    <property type="molecule type" value="mRNA"/>
</dbReference>
<dbReference type="EMBL" id="BT002082">
    <property type="protein sequence ID" value="AAN72093.1"/>
    <property type="molecule type" value="mRNA"/>
</dbReference>
<dbReference type="PIR" id="S71172">
    <property type="entry name" value="S71172"/>
</dbReference>
<dbReference type="RefSeq" id="NP_001318893.1">
    <property type="nucleotide sequence ID" value="NM_001345807.1"/>
</dbReference>
<dbReference type="RefSeq" id="NP_201489.1">
    <property type="nucleotide sequence ID" value="NM_126087.5"/>
</dbReference>
<dbReference type="PDB" id="3UC3">
    <property type="method" value="X-ray"/>
    <property type="resolution" value="1.90 A"/>
    <property type="chains" value="A=1-361"/>
</dbReference>
<dbReference type="PDBsum" id="3UC3"/>
<dbReference type="SMR" id="Q39193"/>
<dbReference type="BioGRID" id="22064">
    <property type="interactions" value="15"/>
</dbReference>
<dbReference type="DIP" id="DIP-48986N"/>
<dbReference type="FunCoup" id="Q39193">
    <property type="interactions" value="1339"/>
</dbReference>
<dbReference type="IntAct" id="Q39193">
    <property type="interactions" value="13"/>
</dbReference>
<dbReference type="STRING" id="3702.Q39193"/>
<dbReference type="iPTMnet" id="Q39193"/>
<dbReference type="PaxDb" id="3702-AT5G66880.1"/>
<dbReference type="ProteomicsDB" id="226876"/>
<dbReference type="EnsemblPlants" id="AT5G66880.1">
    <property type="protein sequence ID" value="AT5G66880.1"/>
    <property type="gene ID" value="AT5G66880"/>
</dbReference>
<dbReference type="EnsemblPlants" id="AT5G66880.2">
    <property type="protein sequence ID" value="AT5G66880.2"/>
    <property type="gene ID" value="AT5G66880"/>
</dbReference>
<dbReference type="GeneID" id="836822"/>
<dbReference type="Gramene" id="AT5G66880.1">
    <property type="protein sequence ID" value="AT5G66880.1"/>
    <property type="gene ID" value="AT5G66880"/>
</dbReference>
<dbReference type="Gramene" id="AT5G66880.2">
    <property type="protein sequence ID" value="AT5G66880.2"/>
    <property type="gene ID" value="AT5G66880"/>
</dbReference>
<dbReference type="KEGG" id="ath:AT5G66880"/>
<dbReference type="Araport" id="AT5G66880"/>
<dbReference type="TAIR" id="AT5G66880">
    <property type="gene designation" value="SNRK2.3"/>
</dbReference>
<dbReference type="eggNOG" id="KOG0583">
    <property type="taxonomic scope" value="Eukaryota"/>
</dbReference>
<dbReference type="HOGENOM" id="CLU_000288_63_0_1"/>
<dbReference type="InParanoid" id="Q39193"/>
<dbReference type="OMA" id="CQTVVSE"/>
<dbReference type="PhylomeDB" id="Q39193"/>
<dbReference type="EvolutionaryTrace" id="Q39193"/>
<dbReference type="PRO" id="PR:Q39193"/>
<dbReference type="Proteomes" id="UP000006548">
    <property type="component" value="Chromosome 5"/>
</dbReference>
<dbReference type="ExpressionAtlas" id="Q39193">
    <property type="expression patterns" value="baseline and differential"/>
</dbReference>
<dbReference type="GO" id="GO:0005737">
    <property type="term" value="C:cytoplasm"/>
    <property type="evidence" value="ECO:0000314"/>
    <property type="project" value="TAIR"/>
</dbReference>
<dbReference type="GO" id="GO:0005634">
    <property type="term" value="C:nucleus"/>
    <property type="evidence" value="ECO:0000314"/>
    <property type="project" value="TAIR"/>
</dbReference>
<dbReference type="GO" id="GO:0009536">
    <property type="term" value="C:plastid"/>
    <property type="evidence" value="ECO:0007005"/>
    <property type="project" value="TAIR"/>
</dbReference>
<dbReference type="GO" id="GO:0005524">
    <property type="term" value="F:ATP binding"/>
    <property type="evidence" value="ECO:0007669"/>
    <property type="project" value="UniProtKB-KW"/>
</dbReference>
<dbReference type="GO" id="GO:0016301">
    <property type="term" value="F:kinase activity"/>
    <property type="evidence" value="ECO:0000314"/>
    <property type="project" value="TAIR"/>
</dbReference>
<dbReference type="GO" id="GO:0004672">
    <property type="term" value="F:protein kinase activity"/>
    <property type="evidence" value="ECO:0000314"/>
    <property type="project" value="TAIR"/>
</dbReference>
<dbReference type="GO" id="GO:0106310">
    <property type="term" value="F:protein serine kinase activity"/>
    <property type="evidence" value="ECO:0007669"/>
    <property type="project" value="RHEA"/>
</dbReference>
<dbReference type="GO" id="GO:0004674">
    <property type="term" value="F:protein serine/threonine kinase activity"/>
    <property type="evidence" value="ECO:0007669"/>
    <property type="project" value="UniProtKB-KW"/>
</dbReference>
<dbReference type="GO" id="GO:0009738">
    <property type="term" value="P:abscisic acid-activated signaling pathway"/>
    <property type="evidence" value="ECO:0000304"/>
    <property type="project" value="TAIR"/>
</dbReference>
<dbReference type="GO" id="GO:0010029">
    <property type="term" value="P:regulation of seed germination"/>
    <property type="evidence" value="ECO:0000316"/>
    <property type="project" value="TAIR"/>
</dbReference>
<dbReference type="GO" id="GO:0009737">
    <property type="term" value="P:response to abscisic acid"/>
    <property type="evidence" value="ECO:0000314"/>
    <property type="project" value="TAIR"/>
</dbReference>
<dbReference type="GO" id="GO:0009739">
    <property type="term" value="P:response to gibberellin"/>
    <property type="evidence" value="ECO:0000316"/>
    <property type="project" value="TAIR"/>
</dbReference>
<dbReference type="GO" id="GO:0006970">
    <property type="term" value="P:response to osmotic stress"/>
    <property type="evidence" value="ECO:0000314"/>
    <property type="project" value="TAIR"/>
</dbReference>
<dbReference type="GO" id="GO:0009651">
    <property type="term" value="P:response to salt stress"/>
    <property type="evidence" value="ECO:0000314"/>
    <property type="project" value="TAIR"/>
</dbReference>
<dbReference type="GO" id="GO:0009414">
    <property type="term" value="P:response to water deprivation"/>
    <property type="evidence" value="ECO:0000316"/>
    <property type="project" value="TAIR"/>
</dbReference>
<dbReference type="CDD" id="cd14665">
    <property type="entry name" value="STKc_SnRK2-3"/>
    <property type="match status" value="1"/>
</dbReference>
<dbReference type="FunFam" id="1.10.510.10:FF:000085">
    <property type="entry name" value="Serine/threonine-protein kinase SRK2E"/>
    <property type="match status" value="1"/>
</dbReference>
<dbReference type="FunFam" id="3.30.200.20:FF:000045">
    <property type="entry name" value="Serine/threonine-protein kinase SRK2E"/>
    <property type="match status" value="1"/>
</dbReference>
<dbReference type="Gene3D" id="3.30.200.20">
    <property type="entry name" value="Phosphorylase Kinase, domain 1"/>
    <property type="match status" value="1"/>
</dbReference>
<dbReference type="Gene3D" id="1.10.510.10">
    <property type="entry name" value="Transferase(Phosphotransferase) domain 1"/>
    <property type="match status" value="1"/>
</dbReference>
<dbReference type="InterPro" id="IPR011009">
    <property type="entry name" value="Kinase-like_dom_sf"/>
</dbReference>
<dbReference type="InterPro" id="IPR000719">
    <property type="entry name" value="Prot_kinase_dom"/>
</dbReference>
<dbReference type="InterPro" id="IPR017441">
    <property type="entry name" value="Protein_kinase_ATP_BS"/>
</dbReference>
<dbReference type="InterPro" id="IPR008271">
    <property type="entry name" value="Ser/Thr_kinase_AS"/>
</dbReference>
<dbReference type="PANTHER" id="PTHR24343">
    <property type="entry name" value="SERINE/THREONINE KINASE"/>
    <property type="match status" value="1"/>
</dbReference>
<dbReference type="PANTHER" id="PTHR24343:SF566">
    <property type="entry name" value="SERINE_THREONINE-PROTEIN KINASE SRK2I"/>
    <property type="match status" value="1"/>
</dbReference>
<dbReference type="Pfam" id="PF00069">
    <property type="entry name" value="Pkinase"/>
    <property type="match status" value="1"/>
</dbReference>
<dbReference type="SMART" id="SM00220">
    <property type="entry name" value="S_TKc"/>
    <property type="match status" value="1"/>
</dbReference>
<dbReference type="SUPFAM" id="SSF56112">
    <property type="entry name" value="Protein kinase-like (PK-like)"/>
    <property type="match status" value="1"/>
</dbReference>
<dbReference type="PROSITE" id="PS00107">
    <property type="entry name" value="PROTEIN_KINASE_ATP"/>
    <property type="match status" value="1"/>
</dbReference>
<dbReference type="PROSITE" id="PS50011">
    <property type="entry name" value="PROTEIN_KINASE_DOM"/>
    <property type="match status" value="1"/>
</dbReference>
<dbReference type="PROSITE" id="PS00108">
    <property type="entry name" value="PROTEIN_KINASE_ST"/>
    <property type="match status" value="1"/>
</dbReference>
<protein>
    <recommendedName>
        <fullName>Serine/threonine-protein kinase SRK2I</fullName>
        <ecNumber>2.7.11.1</ecNumber>
    </recommendedName>
    <alternativeName>
        <fullName>OST1-kinase-like 2</fullName>
    </alternativeName>
    <alternativeName>
        <fullName>Protein ATHPROKIN B</fullName>
    </alternativeName>
    <alternativeName>
        <fullName>SNF1-related kinase 2.3</fullName>
        <shortName>SnRK2.3</shortName>
    </alternativeName>
</protein>
<reference key="1">
    <citation type="submission" date="1992-11" db="EMBL/GenBank/DDBJ databases">
        <title>Two new protein kinases in Arabidopsis.</title>
        <authorList>
            <person name="Gallois P."/>
        </authorList>
    </citation>
    <scope>NUCLEOTIDE SEQUENCE [MRNA]</scope>
    <source>
        <strain>cv. Columbia</strain>
    </source>
</reference>
<reference key="2">
    <citation type="journal article" date="1998" name="DNA Res.">
        <title>Structural analysis of Arabidopsis thaliana chromosome 5. V. Sequence features of the regions of 1,381,565 bp covered by twenty one physically assigned P1 and TAC clones.</title>
        <authorList>
            <person name="Kaneko T."/>
            <person name="Kotani H."/>
            <person name="Nakamura Y."/>
            <person name="Sato S."/>
            <person name="Asamizu E."/>
            <person name="Miyajima N."/>
            <person name="Tabata S."/>
        </authorList>
    </citation>
    <scope>NUCLEOTIDE SEQUENCE [LARGE SCALE GENOMIC DNA]</scope>
    <source>
        <strain>cv. Columbia</strain>
    </source>
</reference>
<reference key="3">
    <citation type="journal article" date="2017" name="Plant J.">
        <title>Araport11: a complete reannotation of the Arabidopsis thaliana reference genome.</title>
        <authorList>
            <person name="Cheng C.Y."/>
            <person name="Krishnakumar V."/>
            <person name="Chan A.P."/>
            <person name="Thibaud-Nissen F."/>
            <person name="Schobel S."/>
            <person name="Town C.D."/>
        </authorList>
    </citation>
    <scope>GENOME REANNOTATION</scope>
    <source>
        <strain>cv. Columbia</strain>
    </source>
</reference>
<reference key="4">
    <citation type="journal article" date="2003" name="Science">
        <title>Empirical analysis of transcriptional activity in the Arabidopsis genome.</title>
        <authorList>
            <person name="Yamada K."/>
            <person name="Lim J."/>
            <person name="Dale J.M."/>
            <person name="Chen H."/>
            <person name="Shinn P."/>
            <person name="Palm C.J."/>
            <person name="Southwick A.M."/>
            <person name="Wu H.C."/>
            <person name="Kim C.J."/>
            <person name="Nguyen M."/>
            <person name="Pham P.K."/>
            <person name="Cheuk R.F."/>
            <person name="Karlin-Newmann G."/>
            <person name="Liu S.X."/>
            <person name="Lam B."/>
            <person name="Sakano H."/>
            <person name="Wu T."/>
            <person name="Yu G."/>
            <person name="Miranda M."/>
            <person name="Quach H.L."/>
            <person name="Tripp M."/>
            <person name="Chang C.H."/>
            <person name="Lee J.M."/>
            <person name="Toriumi M.J."/>
            <person name="Chan M.M."/>
            <person name="Tang C.C."/>
            <person name="Onodera C.S."/>
            <person name="Deng J.M."/>
            <person name="Akiyama K."/>
            <person name="Ansari Y."/>
            <person name="Arakawa T."/>
            <person name="Banh J."/>
            <person name="Banno F."/>
            <person name="Bowser L."/>
            <person name="Brooks S.Y."/>
            <person name="Carninci P."/>
            <person name="Chao Q."/>
            <person name="Choy N."/>
            <person name="Enju A."/>
            <person name="Goldsmith A.D."/>
            <person name="Gurjal M."/>
            <person name="Hansen N.F."/>
            <person name="Hayashizaki Y."/>
            <person name="Johnson-Hopson C."/>
            <person name="Hsuan V.W."/>
            <person name="Iida K."/>
            <person name="Karnes M."/>
            <person name="Khan S."/>
            <person name="Koesema E."/>
            <person name="Ishida J."/>
            <person name="Jiang P.X."/>
            <person name="Jones T."/>
            <person name="Kawai J."/>
            <person name="Kamiya A."/>
            <person name="Meyers C."/>
            <person name="Nakajima M."/>
            <person name="Narusaka M."/>
            <person name="Seki M."/>
            <person name="Sakurai T."/>
            <person name="Satou M."/>
            <person name="Tamse R."/>
            <person name="Vaysberg M."/>
            <person name="Wallender E.K."/>
            <person name="Wong C."/>
            <person name="Yamamura Y."/>
            <person name="Yuan S."/>
            <person name="Shinozaki K."/>
            <person name="Davis R.W."/>
            <person name="Theologis A."/>
            <person name="Ecker J.R."/>
        </authorList>
    </citation>
    <scope>NUCLEOTIDE SEQUENCE [LARGE SCALE MRNA] OF 7-361</scope>
    <source>
        <strain>cv. Columbia</strain>
    </source>
</reference>
<reference key="5">
    <citation type="journal article" date="2003" name="Plant Physiol.">
        <title>The Arabidopsis CDPK-SnRK superfamily of protein kinases.</title>
        <authorList>
            <person name="Hrabak E.M."/>
            <person name="Chan C.W.M."/>
            <person name="Gribskov M."/>
            <person name="Harper J.F."/>
            <person name="Choi J.H."/>
            <person name="Halford N."/>
            <person name="Kudla J."/>
            <person name="Luan S."/>
            <person name="Nimmo H.G."/>
            <person name="Sussman M.R."/>
            <person name="Thomas M."/>
            <person name="Walker-Simmons K."/>
            <person name="Zhu J.-K."/>
            <person name="Harmon A.C."/>
        </authorList>
    </citation>
    <scope>GENE FAMILY</scope>
    <scope>NOMENCLATURE</scope>
</reference>
<reference key="6">
    <citation type="journal article" date="2004" name="J. Biol. Chem.">
        <title>Identification of nine sucrose nonfermenting 1-related protein kinases 2 activated by hyperosmotic and saline stresses in Arabidopsis thaliana.</title>
        <authorList>
            <person name="Boudsocq M."/>
            <person name="Barbier-Brygoo H."/>
            <person name="Lauriere C."/>
        </authorList>
    </citation>
    <scope>TISSUE SPECIFICITY</scope>
    <scope>INDUCTION</scope>
</reference>
<reference key="7">
    <citation type="journal article" date="2006" name="J. Biol. Chem.">
        <title>The regulatory domain of SRK2E/OST1/SnRK2.6 interacts with ABI1 and integrates abscisic acid (ABA) and osmotic stress signals controlling stomatal closure in Arabidopsis.</title>
        <authorList>
            <person name="Yoshida R."/>
            <person name="Umezawa T."/>
            <person name="Mizoguchi T."/>
            <person name="Takahashi S."/>
            <person name="Takahashi F."/>
            <person name="Shinozaki K."/>
        </authorList>
    </citation>
    <scope>GENE FAMILY</scope>
    <scope>INDUCTION</scope>
</reference>
<reference key="8">
    <citation type="journal article" date="2007" name="Plant Cell">
        <title>Identification of two protein kinases required for abscisic acid regulation of seed germination, root growth, and gene expression in Arabidopsis.</title>
        <authorList>
            <person name="Fujii H."/>
            <person name="Verslues P.E."/>
            <person name="Zhu J.-K."/>
        </authorList>
    </citation>
    <scope>FUNCTION</scope>
    <scope>TISSUE SPECIFICITY</scope>
</reference>
<reference key="9">
    <citation type="journal article" date="2009" name="J. Proteomics">
        <title>Phosphoproteomic analysis of nuclei-enriched fractions from Arabidopsis thaliana.</title>
        <authorList>
            <person name="Jones A.M.E."/>
            <person name="MacLean D."/>
            <person name="Studholme D.J."/>
            <person name="Serna-Sanz A."/>
            <person name="Andreasson E."/>
            <person name="Rathjen J.P."/>
            <person name="Peck S.C."/>
        </authorList>
    </citation>
    <scope>IDENTIFICATION BY MASS SPECTROMETRY [LARGE SCALE ANALYSIS]</scope>
    <source>
        <strain>cv. Columbia</strain>
    </source>
</reference>
<reference key="10">
    <citation type="journal article" date="2010" name="Plant J.">
        <title>PYR/PYL/RCAR family members are major in-vivo ABI1 protein phosphatase 2C-interacting proteins in Arabidopsis.</title>
        <authorList>
            <person name="Nishimura N."/>
            <person name="Sarkeshik A."/>
            <person name="Nito K."/>
            <person name="Park S.-Y."/>
            <person name="Wang A."/>
            <person name="Carvalho P.C."/>
            <person name="Lee S."/>
            <person name="Caddell D.F."/>
            <person name="Cutler S.R."/>
            <person name="Chory J."/>
            <person name="Yates J.R."/>
            <person name="Schroeder J.I."/>
        </authorList>
    </citation>
    <scope>INTERACTION WITH ABI1</scope>
</reference>
<reference key="11">
    <citation type="journal article" date="2016" name="PLoS Genet.">
        <title>Type one protein phosphatase 1 and its regulatory protein inhibitor 2 negatively regulate ABA signaling.</title>
        <authorList>
            <person name="Hou Y.J."/>
            <person name="Zhu Y."/>
            <person name="Wang P."/>
            <person name="Zhao Y."/>
            <person name="Xie S."/>
            <person name="Batelli G."/>
            <person name="Wang B."/>
            <person name="Duan C.G."/>
            <person name="Wang X."/>
            <person name="Xing L."/>
            <person name="Lei M."/>
            <person name="Yan J."/>
            <person name="Zhu X."/>
            <person name="Zhu J.K."/>
        </authorList>
    </citation>
    <scope>INTERACTION WITH I-2 AND TOPP1</scope>
</reference>
<reference key="12">
    <citation type="journal article" date="2019" name="Nat. Plants">
        <title>The plant ESCRT component FREE1 shuttles to the nucleus to attenuate abscisic acid signalling.</title>
        <authorList>
            <person name="Li H."/>
            <person name="Li Y."/>
            <person name="Zhao Q."/>
            <person name="Li T."/>
            <person name="Wei J."/>
            <person name="Li B."/>
            <person name="Shen W."/>
            <person name="Yang C."/>
            <person name="Zeng Y."/>
            <person name="Rodriguez P.L."/>
            <person name="Zhao Y."/>
            <person name="Jiang L."/>
            <person name="Wang X."/>
            <person name="Gao C."/>
        </authorList>
    </citation>
    <scope>FUNCTION</scope>
    <scope>INTERACTION WITH FREE1</scope>
</reference>
<reference key="13">
    <citation type="journal article" date="2011" name="Proc. Natl. Acad. Sci. U.S.A.">
        <title>Structural basis for basal activity and autoactivation of abscisic acid (ABA) signaling SnRK2 kinases.</title>
        <authorList>
            <person name="Ng L.M."/>
            <person name="Soon F.F."/>
            <person name="Zhou X.E."/>
            <person name="West G.M."/>
            <person name="Kovach A."/>
            <person name="Suino-Powell K.M."/>
            <person name="Chalmers M.J."/>
            <person name="Li J."/>
            <person name="Yong E.L."/>
            <person name="Zhu J.K."/>
            <person name="Griffin P.R."/>
            <person name="Melcher K."/>
            <person name="Xu H.E."/>
        </authorList>
    </citation>
    <scope>X-RAY CRYSTALLOGRAPHY (1.90 ANGSTROMS)</scope>
    <scope>ACTIVITY REGULATION</scope>
    <scope>AUTOPHOSPHORYLATION</scope>
</reference>
<accession>Q39193</accession>
<accession>Q8RWG9</accession>
<evidence type="ECO:0000255" key="1">
    <source>
        <dbReference type="PROSITE-ProRule" id="PRU00159"/>
    </source>
</evidence>
<evidence type="ECO:0000255" key="2">
    <source>
        <dbReference type="PROSITE-ProRule" id="PRU10027"/>
    </source>
</evidence>
<evidence type="ECO:0000269" key="3">
    <source>
    </source>
</evidence>
<evidence type="ECO:0000269" key="4">
    <source>
    </source>
</evidence>
<evidence type="ECO:0000269" key="5">
    <source>
    </source>
</evidence>
<evidence type="ECO:0000269" key="6">
    <source>
    </source>
</evidence>
<evidence type="ECO:0000269" key="7">
    <source>
    </source>
</evidence>
<evidence type="ECO:0000269" key="8">
    <source>
    </source>
</evidence>
<evidence type="ECO:0000269" key="9">
    <source>
    </source>
</evidence>
<evidence type="ECO:0000305" key="10"/>
<evidence type="ECO:0007829" key="11">
    <source>
        <dbReference type="PDB" id="3UC3"/>
    </source>
</evidence>